<organism>
    <name type="scientific">Tityus serrulatus</name>
    <name type="common">Brazilian scorpion</name>
    <dbReference type="NCBI Taxonomy" id="6887"/>
    <lineage>
        <taxon>Eukaryota</taxon>
        <taxon>Metazoa</taxon>
        <taxon>Ecdysozoa</taxon>
        <taxon>Arthropoda</taxon>
        <taxon>Chelicerata</taxon>
        <taxon>Arachnida</taxon>
        <taxon>Scorpiones</taxon>
        <taxon>Buthida</taxon>
        <taxon>Buthoidea</taxon>
        <taxon>Buthidae</taxon>
        <taxon>Tityus</taxon>
    </lineage>
</organism>
<reference key="1">
    <citation type="journal article" date="2012" name="O. J. Gen.">
        <title>Transcriptome analysis of the Tityus serrulatus scorpion venom gland.</title>
        <authorList>
            <person name="Alvarenga E.R."/>
            <person name="Mendes T.M."/>
            <person name="Magalhaes B.F."/>
            <person name="Siqueira F.F."/>
            <person name="Dantas A.E."/>
            <person name="Barroca T.M."/>
            <person name="Horta C.C."/>
            <person name="Kalapothakis E."/>
        </authorList>
    </citation>
    <scope>NUCLEOTIDE SEQUENCE [MRNA]</scope>
    <source>
        <tissue>Venom gland</tissue>
    </source>
</reference>
<reference evidence="8" key="2">
    <citation type="journal article" date="2021" name="Toxicon">
        <title>Novel components of Tityus serrulatus venom: a transcriptomic approach.</title>
        <authorList>
            <person name="Kalapothakis Y."/>
            <person name="Miranda K."/>
            <person name="Pereira A.H."/>
            <person name="Witt A.S.A."/>
            <person name="Marani C."/>
            <person name="Martins A.P."/>
            <person name="Leal H.G."/>
            <person name="Campos-Junior E."/>
            <person name="Pimenta A.M.C."/>
            <person name="Borges A."/>
            <person name="Chavez-Olortegui C."/>
            <person name="Kalapothakis E."/>
        </authorList>
    </citation>
    <scope>NUCLEOTIDE SEQUENCE [MRNA]</scope>
    <source>
        <tissue>Telson</tissue>
    </source>
</reference>
<evidence type="ECO:0000250" key="1">
    <source>
        <dbReference type="UniProtKB" id="P01496"/>
    </source>
</evidence>
<evidence type="ECO:0000255" key="2"/>
<evidence type="ECO:0000255" key="3">
    <source>
        <dbReference type="PROSITE-ProRule" id="PRU01210"/>
    </source>
</evidence>
<evidence type="ECO:0000303" key="4">
    <source>
    </source>
</evidence>
<evidence type="ECO:0000303" key="5">
    <source ref="1"/>
</evidence>
<evidence type="ECO:0000305" key="6"/>
<evidence type="ECO:0000305" key="7">
    <source>
    </source>
</evidence>
<evidence type="ECO:0000312" key="8">
    <source>
        <dbReference type="EMBL" id="QPD99021.1"/>
    </source>
</evidence>
<protein>
    <recommendedName>
        <fullName evidence="4">Putative sodium channel toxin Ts17</fullName>
    </recommendedName>
    <alternativeName>
        <fullName evidence="4">Putative alpha-NaTx</fullName>
    </alternativeName>
    <alternativeName>
        <fullName evidence="5">Putative alpha-toxin</fullName>
    </alternativeName>
    <alternativeName>
        <fullName evidence="7">Tityustoxin-17</fullName>
    </alternativeName>
</protein>
<sequence length="86" mass="9605">MNYFIFLVVACLLTAGTEGKKDGYPVEGDNCAFACFGYDNAYCDKLCKDKKADSGYCYWVHILCYCYGLPDKEPTKTSGRCKPGKK</sequence>
<name>SCX17_TITSE</name>
<dbReference type="EMBL" id="MT081339">
    <property type="protein sequence ID" value="QPD99021.1"/>
    <property type="molecule type" value="mRNA"/>
</dbReference>
<dbReference type="SMR" id="A0A7S8MU55"/>
<dbReference type="GO" id="GO:0005576">
    <property type="term" value="C:extracellular region"/>
    <property type="evidence" value="ECO:0007669"/>
    <property type="project" value="UniProtKB-SubCell"/>
</dbReference>
<dbReference type="GO" id="GO:0019871">
    <property type="term" value="F:sodium channel inhibitor activity"/>
    <property type="evidence" value="ECO:0007669"/>
    <property type="project" value="InterPro"/>
</dbReference>
<dbReference type="GO" id="GO:0090729">
    <property type="term" value="F:toxin activity"/>
    <property type="evidence" value="ECO:0007669"/>
    <property type="project" value="UniProtKB-KW"/>
</dbReference>
<dbReference type="GO" id="GO:0006952">
    <property type="term" value="P:defense response"/>
    <property type="evidence" value="ECO:0007669"/>
    <property type="project" value="InterPro"/>
</dbReference>
<dbReference type="CDD" id="cd23106">
    <property type="entry name" value="neurotoxins_LC_scorpion"/>
    <property type="match status" value="1"/>
</dbReference>
<dbReference type="Gene3D" id="3.30.30.10">
    <property type="entry name" value="Knottin, scorpion toxin-like"/>
    <property type="match status" value="1"/>
</dbReference>
<dbReference type="InterPro" id="IPR044062">
    <property type="entry name" value="LCN-type_CS_alpha_beta_dom"/>
</dbReference>
<dbReference type="InterPro" id="IPR003614">
    <property type="entry name" value="Scorpion_toxin-like"/>
</dbReference>
<dbReference type="InterPro" id="IPR036574">
    <property type="entry name" value="Scorpion_toxin-like_sf"/>
</dbReference>
<dbReference type="InterPro" id="IPR018218">
    <property type="entry name" value="Scorpion_toxinL"/>
</dbReference>
<dbReference type="InterPro" id="IPR002061">
    <property type="entry name" value="Scorpion_toxinL/defensin"/>
</dbReference>
<dbReference type="Pfam" id="PF00537">
    <property type="entry name" value="Toxin_3"/>
    <property type="match status" value="1"/>
</dbReference>
<dbReference type="PRINTS" id="PR00285">
    <property type="entry name" value="SCORPNTOXIN"/>
</dbReference>
<dbReference type="SMART" id="SM00505">
    <property type="entry name" value="Knot1"/>
    <property type="match status" value="1"/>
</dbReference>
<dbReference type="SUPFAM" id="SSF57095">
    <property type="entry name" value="Scorpion toxin-like"/>
    <property type="match status" value="1"/>
</dbReference>
<dbReference type="PROSITE" id="PS51863">
    <property type="entry name" value="LCN_CSAB"/>
    <property type="match status" value="1"/>
</dbReference>
<proteinExistence type="inferred from homology"/>
<accession>A0A7S8MU55</accession>
<keyword id="KW-0027">Amidation</keyword>
<keyword id="KW-1015">Disulfide bond</keyword>
<keyword id="KW-0872">Ion channel impairing toxin</keyword>
<keyword id="KW-0528">Neurotoxin</keyword>
<keyword id="KW-0964">Secreted</keyword>
<keyword id="KW-0732">Signal</keyword>
<keyword id="KW-0800">Toxin</keyword>
<keyword id="KW-0738">Voltage-gated sodium channel impairing toxin</keyword>
<feature type="signal peptide" evidence="2">
    <location>
        <begin position="1"/>
        <end position="19"/>
    </location>
</feature>
<feature type="chain" id="PRO_5031227619" description="Putative sodium channel toxin Ts17" evidence="6">
    <location>
        <begin position="20"/>
        <end position="83"/>
    </location>
</feature>
<feature type="domain" description="LCN-type CS-alpha/beta" evidence="3">
    <location>
        <begin position="21"/>
        <end position="82"/>
    </location>
</feature>
<feature type="modified residue" description="Proline amide" evidence="6">
    <location>
        <position position="83"/>
    </location>
</feature>
<feature type="disulfide bond" evidence="3">
    <location>
        <begin position="31"/>
        <end position="81"/>
    </location>
</feature>
<feature type="disulfide bond" evidence="3">
    <location>
        <begin position="35"/>
        <end position="57"/>
    </location>
</feature>
<feature type="disulfide bond" evidence="3">
    <location>
        <begin position="43"/>
        <end position="64"/>
    </location>
</feature>
<feature type="disulfide bond" evidence="3">
    <location>
        <begin position="47"/>
        <end position="66"/>
    </location>
</feature>
<comment type="function">
    <text evidence="1">Alpha toxins bind voltage-independently at site-3 of sodium channels (Nav) and inhibit the inactivation of the activated channels, thereby blocking neuronal transmission.</text>
</comment>
<comment type="subcellular location">
    <subcellularLocation>
        <location evidence="7">Secreted</location>
    </subcellularLocation>
</comment>
<comment type="tissue specificity">
    <text evidence="7">Expressed by the venom gland.</text>
</comment>
<comment type="domain">
    <text evidence="6">Has the structural arrangement of an alpha-helix connected to antiparallel beta-sheets by disulfide bonds (CS-alpha/beta).</text>
</comment>
<comment type="similarity">
    <text evidence="6">Belongs to the long (4 C-C) scorpion toxin superfamily. Sodium channel inhibitor family. Alpha subfamily.</text>
</comment>